<sequence>MASTTPITMEDLQKALEAQSRALRAELAAGASQLRRPRPPRQRDSSTSGDDSGRDSGGPRRRRGNRGRGQRKDWSKAPPPPEERQESRSQTPAPKPPRAPPQPPQPPRMQTGRGGTAPRPELGPPTNPFQAAVARGLRPPLHDPDTEAPTEACVTSWLWSEGEGAVFYRVDLHFTNLGTPPLDEDGRWDPALMYNPCGPEPPAHVVRAYNQPAGDVRGIWGKGERTYAEQDFRVGGTRWHRLLRMPVRGLDGDSAPLPPHTTERIETRSARHPWRIRFGAPQVFLAGLLLAAVAVGTARAGLQPRTDIAAPPAPPQAPRAHGKHYGHHHHQLPFLGHDGHHGGTLRVGQHHRNASDVLPGHWLQGSWGCYNLSDWHQGTHICHTKHMDFWCVEHDRPPPVTPTPLTTAANSTTAATPATTPAPCHAGLNDSCGGFLSGCGPMRLRHGADTRCGRLICGLSTTAQYPPTRFGCTMRWGLPPWELVVLTARPEDGWTCRGVPAHPGTRCPELVSPMGHATCSPASALWLATANALSLDHALAAVVLLVPWVLIFMLCRRACRRRGAAAALTAVVLQGYNPPAYGEEAFTYLCTAPGCATQTPVPVRLAGVRFESKIVDGGCFAPWDLEATGACICEIPTDVSCEGLGAWVPAAPCARIWNGTQRACTLWAVNAYSSGGYAQLASYFNPGGSYYKQYHPTACDVEPAFGHSDAACWGFPTDTVMSVFALASYVQHPDKTVRVKFHTETRTVWQLSVAGVSCNVTTEHPFCNTPHGQLEVQVPPDPGDLVEYIMNYTGNQQSRWGLGSPNCHGPDWASPVCQRHSPDCSRLVGATPERPRLRLVDADDPLLRTAPGPGEVWVTPVIGSQARKCGLHIRAGPYGHATVEMPEWIHAHTTSDPWHPPGPLGLKFKTVRPVALPRALAPPRNVRVTGCYQCGTPALVEGLAPGGGNCHLTVNGEDVGAFPPGKFVTAALLNTPPPYQVSCGGESDRASARVIDPAAQSFTGVVYGTHTTAVSETRQTWAEWAAAHWWQLTLGAICALLLAGLLACCAKCLYYLRGAIAPR</sequence>
<name>POLS_RUBVB</name>
<protein>
    <recommendedName>
        <fullName>Structural polyprotein</fullName>
    </recommendedName>
    <alternativeName>
        <fullName>p110</fullName>
    </alternativeName>
    <component>
        <recommendedName>
            <fullName>Capsid protein</fullName>
        </recommendedName>
        <alternativeName>
            <fullName>Coat protein</fullName>
            <shortName>C</shortName>
        </alternativeName>
    </component>
    <component>
        <recommendedName>
            <fullName>Spike glycoprotein E2</fullName>
        </recommendedName>
        <alternativeName>
            <fullName>E2 envelope glycoprotein</fullName>
        </alternativeName>
    </component>
    <component>
        <recommendedName>
            <fullName>Spike glycoprotein E1</fullName>
        </recommendedName>
        <alternativeName>
            <fullName>E1 envelope glycoprotein</fullName>
        </alternativeName>
    </component>
</protein>
<keyword id="KW-0106">Calcium</keyword>
<keyword id="KW-0167">Capsid protein</keyword>
<keyword id="KW-1165">Clathrin-mediated endocytosis of virus by host</keyword>
<keyword id="KW-1015">Disulfide bond</keyword>
<keyword id="KW-1170">Fusion of virus membrane with host endosomal membrane</keyword>
<keyword id="KW-1168">Fusion of virus membrane with host membrane</keyword>
<keyword id="KW-0325">Glycoprotein</keyword>
<keyword id="KW-1035">Host cytoplasm</keyword>
<keyword id="KW-1040">Host Golgi apparatus</keyword>
<keyword id="KW-1043">Host membrane</keyword>
<keyword id="KW-1045">Host mitochondrion</keyword>
<keyword id="KW-0945">Host-virus interaction</keyword>
<keyword id="KW-0449">Lipoprotein</keyword>
<keyword id="KW-0472">Membrane</keyword>
<keyword id="KW-0479">Metal-binding</keyword>
<keyword id="KW-0564">Palmitate</keyword>
<keyword id="KW-0597">Phosphoprotein</keyword>
<keyword id="KW-0694">RNA-binding</keyword>
<keyword id="KW-1144">T=4 icosahedral capsid protein</keyword>
<keyword id="KW-0812">Transmembrane</keyword>
<keyword id="KW-1133">Transmembrane helix</keyword>
<keyword id="KW-1161">Viral attachment to host cell</keyword>
<keyword id="KW-0261">Viral envelope protein</keyword>
<keyword id="KW-1162">Viral penetration into host cytoplasm</keyword>
<keyword id="KW-0946">Virion</keyword>
<keyword id="KW-1164">Virus endocytosis by host</keyword>
<keyword id="KW-1160">Virus entry into host cell</keyword>
<organism>
    <name type="scientific">Rubella virus (strain BRD1)</name>
    <name type="common">RUBV</name>
    <dbReference type="NCBI Taxonomy" id="376262"/>
    <lineage>
        <taxon>Viruses</taxon>
        <taxon>Riboviria</taxon>
        <taxon>Orthornavirae</taxon>
        <taxon>Kitrinoviricota</taxon>
        <taxon>Alsuviricetes</taxon>
        <taxon>Hepelivirales</taxon>
        <taxon>Matonaviridae</taxon>
        <taxon>Rubivirus</taxon>
        <taxon>Rubivirus rubellae</taxon>
    </lineage>
</organism>
<reference key="1">
    <citation type="journal article" date="2003" name="Arch. Virol.">
        <title>Characterization of genotype II Rubella virus strains.</title>
        <authorList>
            <person name="Zheng D.-P."/>
            <person name="Zhou Y.M."/>
            <person name="Zhao K."/>
            <person name="Han Y.-R."/>
            <person name="Frey T.K."/>
        </authorList>
    </citation>
    <scope>NUCLEOTIDE SEQUENCE [GENOMIC RNA]</scope>
</reference>
<proteinExistence type="inferred from homology"/>
<dbReference type="EMBL" id="AY258322">
    <property type="protein sequence ID" value="AAP82233.1"/>
    <property type="molecule type" value="Genomic_RNA"/>
</dbReference>
<dbReference type="SMR" id="Q6X2U3"/>
<dbReference type="IntAct" id="Q6X2U3">
    <property type="interactions" value="2"/>
</dbReference>
<dbReference type="Proteomes" id="UP000007185">
    <property type="component" value="Genome"/>
</dbReference>
<dbReference type="GO" id="GO:0044178">
    <property type="term" value="C:host cell Golgi membrane"/>
    <property type="evidence" value="ECO:0007669"/>
    <property type="project" value="UniProtKB-SubCell"/>
</dbReference>
<dbReference type="GO" id="GO:0033650">
    <property type="term" value="C:host cell mitochondrion"/>
    <property type="evidence" value="ECO:0007669"/>
    <property type="project" value="UniProtKB-SubCell"/>
</dbReference>
<dbReference type="GO" id="GO:0016020">
    <property type="term" value="C:membrane"/>
    <property type="evidence" value="ECO:0007669"/>
    <property type="project" value="UniProtKB-KW"/>
</dbReference>
<dbReference type="GO" id="GO:0039619">
    <property type="term" value="C:T=4 icosahedral viral capsid"/>
    <property type="evidence" value="ECO:0007669"/>
    <property type="project" value="UniProtKB-KW"/>
</dbReference>
<dbReference type="GO" id="GO:0019031">
    <property type="term" value="C:viral envelope"/>
    <property type="evidence" value="ECO:0007669"/>
    <property type="project" value="UniProtKB-KW"/>
</dbReference>
<dbReference type="GO" id="GO:0019013">
    <property type="term" value="C:viral nucleocapsid"/>
    <property type="evidence" value="ECO:0007669"/>
    <property type="project" value="InterPro"/>
</dbReference>
<dbReference type="GO" id="GO:0055036">
    <property type="term" value="C:virion membrane"/>
    <property type="evidence" value="ECO:0007669"/>
    <property type="project" value="UniProtKB-SubCell"/>
</dbReference>
<dbReference type="GO" id="GO:0046872">
    <property type="term" value="F:metal ion binding"/>
    <property type="evidence" value="ECO:0007669"/>
    <property type="project" value="UniProtKB-KW"/>
</dbReference>
<dbReference type="GO" id="GO:0003723">
    <property type="term" value="F:RNA binding"/>
    <property type="evidence" value="ECO:0007669"/>
    <property type="project" value="UniProtKB-KW"/>
</dbReference>
<dbReference type="GO" id="GO:0075512">
    <property type="term" value="P:clathrin-dependent endocytosis of virus by host cell"/>
    <property type="evidence" value="ECO:0007669"/>
    <property type="project" value="UniProtKB-KW"/>
</dbReference>
<dbReference type="GO" id="GO:0039654">
    <property type="term" value="P:fusion of virus membrane with host endosome membrane"/>
    <property type="evidence" value="ECO:0007669"/>
    <property type="project" value="UniProtKB-KW"/>
</dbReference>
<dbReference type="GO" id="GO:0019062">
    <property type="term" value="P:virion attachment to host cell"/>
    <property type="evidence" value="ECO:0007669"/>
    <property type="project" value="UniProtKB-KW"/>
</dbReference>
<dbReference type="Gene3D" id="2.60.98.30">
    <property type="entry name" value="Rubella membrane glycoprotein E1, domain 1"/>
    <property type="match status" value="1"/>
</dbReference>
<dbReference type="Gene3D" id="3.30.67.20">
    <property type="entry name" value="Rubella membrane glycoprotein E1, domain 2"/>
    <property type="match status" value="2"/>
</dbReference>
<dbReference type="Gene3D" id="2.60.40.2650">
    <property type="entry name" value="Rubella membrane glycoprotein E1, domain 3"/>
    <property type="match status" value="1"/>
</dbReference>
<dbReference type="Gene3D" id="3.10.50.50">
    <property type="entry name" value="Rubella virus capsid protein"/>
    <property type="match status" value="1"/>
</dbReference>
<dbReference type="InterPro" id="IPR008819">
    <property type="entry name" value="Rubella_Capsid"/>
</dbReference>
<dbReference type="InterPro" id="IPR043106">
    <property type="entry name" value="Rubella_Capsid_sf"/>
</dbReference>
<dbReference type="InterPro" id="IPR008820">
    <property type="entry name" value="Rubella_E1"/>
</dbReference>
<dbReference type="InterPro" id="IPR042500">
    <property type="entry name" value="Rubella_E1_1"/>
</dbReference>
<dbReference type="InterPro" id="IPR042498">
    <property type="entry name" value="Rubella_E1_2"/>
</dbReference>
<dbReference type="InterPro" id="IPR042499">
    <property type="entry name" value="Rubella_E1_3"/>
</dbReference>
<dbReference type="InterPro" id="IPR008821">
    <property type="entry name" value="Rubella_E2"/>
</dbReference>
<dbReference type="PANTHER" id="PTHR13037">
    <property type="entry name" value="FORMIN"/>
    <property type="match status" value="1"/>
</dbReference>
<dbReference type="PANTHER" id="PTHR13037:SF24">
    <property type="entry name" value="POLYCOMB PROTEIN PCL-RELATED"/>
    <property type="match status" value="1"/>
</dbReference>
<dbReference type="Pfam" id="PF05750">
    <property type="entry name" value="Rubella_Capsid"/>
    <property type="match status" value="1"/>
</dbReference>
<dbReference type="Pfam" id="PF05748">
    <property type="entry name" value="Rubella_E1"/>
    <property type="match status" value="1"/>
</dbReference>
<dbReference type="Pfam" id="PF05749">
    <property type="entry name" value="Rubella_E2"/>
    <property type="match status" value="1"/>
</dbReference>
<organismHost>
    <name type="scientific">Homo sapiens</name>
    <name type="common">Human</name>
    <dbReference type="NCBI Taxonomy" id="9606"/>
</organismHost>
<comment type="function">
    <molecule>Capsid protein</molecule>
    <text evidence="3">Capsid protein interacts with genomic RNA and assembles into icosahedric core particles 65-70 nm in diameter. The resulting nucleocapsid eventually associates with the cytoplasmic domain of E2 at the cell membrane, leading to budding and formation of mature virions from host Golgi membranes. Phosphorylation negatively regulates RNA-binding activity, possibly delaying virion assembly during the viral replication phase. Capsid protein dimerizes and becomes disulfide-linked in the virion. Modulates genomic RNA replication. Modulates subgenomic RNA synthesis by interacting with human C1QBP/SF2P32. Induces both perinuclear clustering of mitochondria and the formation of electron-dense intermitochondrial plaques, both hallmarks of rubella virus infected cells. Induces apoptosis when expressed in transfected cells.</text>
</comment>
<comment type="function">
    <molecule>Spike glycoprotein E2</molecule>
    <text evidence="3">Responsible for viral attachment to target host cell, by binding to the cell receptor. Its transport to the plasma membrane depends on interaction with E1 protein. The surface glycoproteins display an irregular helical organization and a pseudo-tetrameric inner nucleocapsid arrangement.</text>
</comment>
<comment type="function">
    <molecule>Spike glycoprotein E1</molecule>
    <text evidence="2 3">Class II viral fusion protein (By similarity). Fusion activity is inactive as long as E1 is bound to E2 in mature virion. After virus attachment to target cell and clathrin-mediated endocytosis, acidification of the endosome would induce dissociation of E1/E2 heterodimer and concomitant trimerization of the E1 subunits (By similarity). This E1 homotrimer is fusion active, and promotes release of viral nucleocapsid in cytoplasm after endosome and viral membrane fusion. The cytoplasmic tail of spike glycoprotein E1 modulates virus release. The surface glycoproteins display an irregular helical organization and a pseudo-tetrameric inner nucleocapsid arrangement (By similarity).</text>
</comment>
<comment type="subunit">
    <molecule>Capsid protein</molecule>
    <text evidence="3">Homodimer; further assembles into homooligomer. Interacts with human C1QBP. Interacts (via N-terminus) with protease/methyltransferase p150.</text>
</comment>
<comment type="subunit">
    <molecule>Spike glycoprotein E1</molecule>
    <text evidence="3">Heterodimer with spike glycoprotein E2.</text>
</comment>
<comment type="subunit">
    <molecule>Spike glycoprotein E2</molecule>
    <text evidence="3">Heterodimer with spike glycoprotein E1.</text>
</comment>
<comment type="subcellular location">
    <molecule>Capsid protein</molecule>
    <subcellularLocation>
        <location evidence="3">Virion</location>
    </subcellularLocation>
    <subcellularLocation>
        <location>Host cytoplasm</location>
    </subcellularLocation>
    <subcellularLocation>
        <location evidence="3">Host mitochondrion</location>
    </subcellularLocation>
    <text evidence="3">The capsid protein is concentrated around Golgi region (By similarity). In the virion, it is probably associated to the viral membrane (By similarity).</text>
</comment>
<comment type="subcellular location">
    <molecule>Spike glycoprotein E2</molecule>
    <subcellularLocation>
        <location evidence="3">Virion membrane</location>
        <topology evidence="3">Single-pass type I membrane protein</topology>
    </subcellularLocation>
    <subcellularLocation>
        <location evidence="3">Host Golgi apparatus membrane</location>
        <topology evidence="3">Single-pass type I membrane protein</topology>
    </subcellularLocation>
    <text evidence="3">E1 and E2 form heterodimer in the endoplasmic reticulum before they are transported to and retained in the Golgi complex, where virus assembly occurs. E1 possesses an endoplasmic reticulum retention signal, and unassembled E2 and E1 subunits are retained in the endoplasmic reticulum. Presumably, assembly of E2 and E1 would mask the signal, thereby allowing transport of the heterodimer to the Golgi complex.</text>
</comment>
<comment type="subcellular location">
    <molecule>Spike glycoprotein E1</molecule>
    <subcellularLocation>
        <location evidence="3">Virion membrane</location>
        <topology evidence="3">Single-pass type I membrane protein</topology>
    </subcellularLocation>
    <subcellularLocation>
        <location evidence="3">Host Golgi apparatus membrane</location>
        <topology evidence="3">Single-pass type I membrane protein</topology>
    </subcellularLocation>
    <text evidence="3">E1 and E2 form heterodimer in the endoplasmic reticulum before they are transported to and retained in the Golgi complex, where virus assembly occurs. E1 possesses an endoplasmic reticulum retention signal, and unassembled E2 and E1 subunits are retained in the endoplasmic reticulum. Presumably, assembly of E2 and E1 would mask the signal, thereby allowing transport of the heterodimer to the Golgi complex.</text>
</comment>
<comment type="domain">
    <text evidence="3">Structural polyprotein: Contains two internal signal peptides that are necessary for directing translocation of the glycoproteins into the lumen of the endoplasmic reticulum.</text>
</comment>
<comment type="domain">
    <molecule>Capsid protein</molecule>
    <text evidence="3">The capsid protein is probably attached to the viral membrane through the E2 signal peptide. This domain is also required for the localization of the capsid protein to the juxtanuclear region and subsequent virus assembly at the Golgi complex.</text>
</comment>
<comment type="PTM">
    <text evidence="3">Structural polyprotein: Specific enzymatic cleavages in vivo yield mature proteins. Two signal peptidase-mediated cleavages within the polyprotein produce the structural proteins capsid, E2, and E1. The E2 signal peptide remains attached to the C-terminus of the capsid protein after cleavage by the signal peptidase. Another signal peptide at E2 C-terminus directs E1 to the ER, with a similar mechanism.</text>
</comment>
<comment type="PTM">
    <molecule>Spike glycoprotein E1</molecule>
    <text evidence="3">Contains three N-linked oligosaccharides.</text>
</comment>
<comment type="PTM">
    <text evidence="1 3">Capsid is phosphorylated on Ser-46 by host. This phosphorylation negatively regulates capsid protein RNA-binding activity (By similarity). Dephosphorylated by human PP1A (By similarity).</text>
</comment>
<comment type="miscellaneous">
    <text evidence="3">Structural polyprotein: Translated from a subgenomic RNA synthesized during togaviruses replication.</text>
</comment>
<accession>Q6X2U3</accession>
<evidence type="ECO:0000250" key="1"/>
<evidence type="ECO:0000250" key="2">
    <source>
        <dbReference type="UniProtKB" id="P07566"/>
    </source>
</evidence>
<evidence type="ECO:0000250" key="3">
    <source>
        <dbReference type="UniProtKB" id="P08563"/>
    </source>
</evidence>
<evidence type="ECO:0000255" key="4"/>
<evidence type="ECO:0000256" key="5">
    <source>
        <dbReference type="SAM" id="MobiDB-lite"/>
    </source>
</evidence>
<feature type="chain" id="PRO_0000238984" description="Capsid protein">
    <location>
        <begin position="1"/>
        <end position="300"/>
    </location>
</feature>
<feature type="chain" id="PRO_0000238985" description="Spike glycoprotein E2">
    <location>
        <begin position="301"/>
        <end position="582"/>
    </location>
</feature>
<feature type="chain" id="PRO_0000238986" description="Spike glycoprotein E1">
    <location>
        <begin position="583"/>
        <end position="1063"/>
    </location>
</feature>
<feature type="topological domain" description="Extracellular" evidence="4">
    <location>
        <begin position="301"/>
        <end position="534"/>
    </location>
</feature>
<feature type="transmembrane region" description="Helical; Note=Golgi retention signal" evidence="3">
    <location>
        <begin position="535"/>
        <end position="555"/>
    </location>
</feature>
<feature type="topological domain" description="Cytoplasmic" evidence="4">
    <location>
        <begin position="556"/>
        <end position="582"/>
    </location>
</feature>
<feature type="topological domain" description="Extracellular" evidence="4">
    <location>
        <begin position="583"/>
        <end position="1028"/>
    </location>
</feature>
<feature type="transmembrane region" description="Helical; Note=Endoplasmic reticulum retention signal" evidence="3">
    <location>
        <begin position="1029"/>
        <end position="1049"/>
    </location>
</feature>
<feature type="topological domain" description="Extracellular" evidence="4">
    <location>
        <begin position="1050"/>
        <end position="1063"/>
    </location>
</feature>
<feature type="region of interest" description="Disordered" evidence="5">
    <location>
        <begin position="23"/>
        <end position="131"/>
    </location>
</feature>
<feature type="region of interest" description="Human C1QBP/SF2P32-binding" evidence="1">
    <location>
        <begin position="30"/>
        <end position="69"/>
    </location>
</feature>
<feature type="region of interest" description="Functions as E2 signal peptide" evidence="3">
    <location>
        <begin position="279"/>
        <end position="300"/>
    </location>
</feature>
<feature type="region of interest" description="Disordered" evidence="5">
    <location>
        <begin position="305"/>
        <end position="327"/>
    </location>
</feature>
<feature type="region of interest" description="Functions as E1 signal peptide" evidence="3">
    <location>
        <begin position="563"/>
        <end position="582"/>
    </location>
</feature>
<feature type="compositionally biased region" description="Basic residues" evidence="5">
    <location>
        <begin position="59"/>
        <end position="69"/>
    </location>
</feature>
<feature type="compositionally biased region" description="Basic and acidic residues" evidence="5">
    <location>
        <begin position="70"/>
        <end position="87"/>
    </location>
</feature>
<feature type="compositionally biased region" description="Pro residues" evidence="5">
    <location>
        <begin position="93"/>
        <end position="107"/>
    </location>
</feature>
<feature type="binding site" evidence="3">
    <location>
        <position position="670"/>
    </location>
    <ligand>
        <name>Ca(2+)</name>
        <dbReference type="ChEBI" id="CHEBI:29108"/>
    </ligand>
</feature>
<feature type="binding site" evidence="3">
    <location>
        <position position="671"/>
    </location>
    <ligand>
        <name>Ca(2+)</name>
        <dbReference type="ChEBI" id="CHEBI:29108"/>
    </ligand>
</feature>
<feature type="binding site" evidence="3">
    <location>
        <position position="718"/>
    </location>
    <ligand>
        <name>Ca(2+)</name>
        <dbReference type="ChEBI" id="CHEBI:29108"/>
    </ligand>
</feature>
<feature type="binding site" evidence="3">
    <location>
        <position position="719"/>
    </location>
    <ligand>
        <name>Ca(2+)</name>
        <dbReference type="ChEBI" id="CHEBI:29108"/>
    </ligand>
</feature>
<feature type="site" description="Cleavage; by host signal peptidase" evidence="4">
    <location>
        <begin position="300"/>
        <end position="301"/>
    </location>
</feature>
<feature type="site" description="Cleavage; by host signal peptidase" evidence="4">
    <location>
        <begin position="582"/>
        <end position="583"/>
    </location>
</feature>
<feature type="modified residue" description="Phosphoserine; by host" evidence="3">
    <location>
        <position position="46"/>
    </location>
</feature>
<feature type="glycosylation site" description="N-linked (GlcNAc...) asparagine; by host" evidence="4">
    <location>
        <position position="353"/>
    </location>
</feature>
<feature type="glycosylation site" description="N-linked (GlcNAc...) asparagine; by host" evidence="4">
    <location>
        <position position="371"/>
    </location>
</feature>
<feature type="glycosylation site" description="N-linked (GlcNAc...) asparagine; by host" evidence="4">
    <location>
        <position position="410"/>
    </location>
</feature>
<feature type="glycosylation site" description="N-linked (GlcNAc...) asparagine; by host" evidence="4">
    <location>
        <position position="429"/>
    </location>
</feature>
<feature type="glycosylation site" description="N-linked (GlcNAc...) asparagine; by host" evidence="3">
    <location>
        <position position="658"/>
    </location>
</feature>
<feature type="glycosylation site" description="N-linked (GlcNAc...) asparagine; by host" evidence="3">
    <location>
        <position position="759"/>
    </location>
</feature>
<feature type="glycosylation site" description="N-linked (GlcNAc...) asparagine; by host" evidence="3">
    <location>
        <position position="791"/>
    </location>
</feature>
<feature type="glycosylation site" description="O-linked (GalNAc...) threonine; by host" evidence="3">
    <location>
        <position position="1011"/>
    </location>
</feature>
<feature type="glycosylation site" description="O-linked (GalNAc...) threonine; by host" evidence="3">
    <location>
        <position position="1012"/>
    </location>
</feature>
<feature type="disulfide bond" evidence="3">
    <location>
        <begin position="153"/>
        <end position="197"/>
    </location>
</feature>
<feature type="disulfide bond" evidence="2">
    <location>
        <begin position="590"/>
        <end position="595"/>
    </location>
</feature>
<feature type="disulfide bond" evidence="2">
    <location>
        <begin position="619"/>
        <end position="824"/>
    </location>
</feature>
<feature type="disulfide bond" evidence="2">
    <location>
        <begin position="641"/>
        <end position="653"/>
    </location>
</feature>
<feature type="disulfide bond" evidence="2">
    <location>
        <begin position="699"/>
        <end position="712"/>
    </location>
</feature>
<feature type="disulfide bond" evidence="2">
    <location>
        <begin position="758"/>
        <end position="767"/>
    </location>
</feature>
<feature type="disulfide bond" evidence="2">
    <location>
        <begin position="807"/>
        <end position="817"/>
    </location>
</feature>
<feature type="disulfide bond" evidence="2">
    <location>
        <begin position="931"/>
        <end position="934"/>
    </location>
</feature>
<feature type="disulfide bond" evidence="2">
    <location>
        <begin position="950"/>
        <end position="983"/>
    </location>
</feature>